<protein>
    <recommendedName>
        <fullName evidence="3">O-methyltransferase rstn1</fullName>
        <ecNumber evidence="2">2.1.1.-</ecNumber>
    </recommendedName>
    <alternativeName>
        <fullName evidence="3">Restricticin biosynthesis cluster protein 1</fullName>
    </alternativeName>
</protein>
<name>RSTN1_ASPN3</name>
<dbReference type="EC" id="2.1.1.-" evidence="2"/>
<dbReference type="EMBL" id="JNOM01000015">
    <property type="protein sequence ID" value="KNG90367.1"/>
    <property type="molecule type" value="Genomic_DNA"/>
</dbReference>
<dbReference type="RefSeq" id="XP_015411290.1">
    <property type="nucleotide sequence ID" value="XM_015546699.1"/>
</dbReference>
<dbReference type="STRING" id="1509407.A0A0L1JF88"/>
<dbReference type="GeneID" id="26803246"/>
<dbReference type="OrthoDB" id="18686at5052"/>
<dbReference type="Proteomes" id="UP000037505">
    <property type="component" value="Unassembled WGS sequence"/>
</dbReference>
<dbReference type="GO" id="GO:0008757">
    <property type="term" value="F:S-adenosylmethionine-dependent methyltransferase activity"/>
    <property type="evidence" value="ECO:0007669"/>
    <property type="project" value="InterPro"/>
</dbReference>
<dbReference type="GO" id="GO:0032259">
    <property type="term" value="P:methylation"/>
    <property type="evidence" value="ECO:0007669"/>
    <property type="project" value="UniProtKB-KW"/>
</dbReference>
<dbReference type="CDD" id="cd02440">
    <property type="entry name" value="AdoMet_MTases"/>
    <property type="match status" value="1"/>
</dbReference>
<dbReference type="Gene3D" id="3.40.50.150">
    <property type="entry name" value="Vaccinia Virus protein VP39"/>
    <property type="match status" value="1"/>
</dbReference>
<dbReference type="InterPro" id="IPR050447">
    <property type="entry name" value="Erg6_SMT_methyltransf"/>
</dbReference>
<dbReference type="InterPro" id="IPR013216">
    <property type="entry name" value="Methyltransf_11"/>
</dbReference>
<dbReference type="InterPro" id="IPR029063">
    <property type="entry name" value="SAM-dependent_MTases_sf"/>
</dbReference>
<dbReference type="PANTHER" id="PTHR44068:SF11">
    <property type="entry name" value="GERANYL DIPHOSPHATE 2-C-METHYLTRANSFERASE"/>
    <property type="match status" value="1"/>
</dbReference>
<dbReference type="PANTHER" id="PTHR44068">
    <property type="entry name" value="ZGC:194242"/>
    <property type="match status" value="1"/>
</dbReference>
<dbReference type="Pfam" id="PF08241">
    <property type="entry name" value="Methyltransf_11"/>
    <property type="match status" value="1"/>
</dbReference>
<dbReference type="SUPFAM" id="SSF53335">
    <property type="entry name" value="S-adenosyl-L-methionine-dependent methyltransferases"/>
    <property type="match status" value="1"/>
</dbReference>
<reference key="1">
    <citation type="journal article" date="2015" name="BMC Genomics">
        <title>Genomic sequence of the aflatoxigenic filamentous fungus Aspergillus nomius.</title>
        <authorList>
            <person name="Moore G.G."/>
            <person name="Mack B.M."/>
            <person name="Beltz S.B."/>
        </authorList>
    </citation>
    <scope>NUCLEOTIDE SEQUENCE [LARGE SCALE GENOMIC DNA]</scope>
    <source>
        <strain>ATCC 15546 / NRRL 13137 / CBS 260.88 / M93</strain>
    </source>
</reference>
<reference key="2">
    <citation type="journal article" date="2021" name="J. Am. Chem. Soc.">
        <title>Targeted genome mining reveals the biosynthetic gene clusters of natural product CYP51 inhibitors.</title>
        <authorList>
            <person name="Liu N."/>
            <person name="Abramyan E.D."/>
            <person name="Cheng W."/>
            <person name="Perlatti B."/>
            <person name="Harvey C.J.B."/>
            <person name="Bills G.F."/>
            <person name="Tang Y."/>
        </authorList>
    </citation>
    <scope>FUNCTION</scope>
    <scope>CATALYTIC ACTIVITY</scope>
    <scope>BIOPHYSICOCHEMICAL PROPERTIES</scope>
    <scope>PATHWAY</scope>
</reference>
<comment type="function">
    <text evidence="2">O-methyltransferase; part of the gene cluster that mediates the biosynthesis of the tetrahydropyranyl antifungal agent restricticin that acts as an inhibitor of CYP51 and blocks the ergosterol biosynthesis (PubMed:33857369). Within the pathway, rstn1 uses S-adenosylmethionine to methylate position C4 of desmethylrestrictinol to produce restrictinol (PubMed:33857369). The highly reducing polyketide synthase rstn3, the short chain dehydrogenase rstn4, the cyclase rstn5, the FAD-dependent monooxygenase rstn6 and the enoylreductase rstn7 are required to generate the first stable intermediate desmethylrestrictinol. Rstn3 with rstn7 biosynthesize the first polyketide chain intermediate that is reduced by rstn4, followed by epoxidation by rstn6 before 6-endo cyclization via epoxide opening by rstn5 leads to desmethylrestrictinol. The methyltransferase rstn1 then catalyzes the C4 O-methylation of desmethylrestrictinol to produce restrictinol, and the nonribosomal peptide synthetase rstn8 catalyzes the C3 esterification of restrictinol with glycine that leads to restricticin (PubMed:33857369).</text>
</comment>
<comment type="catalytic activity">
    <reaction evidence="2">
        <text>desmethylrestrictinol + S-adenosyl-L-methionine = restrictinol + S-adenosyl-L-homocysteine + H(+)</text>
        <dbReference type="Rhea" id="RHEA:81531"/>
        <dbReference type="ChEBI" id="CHEBI:15378"/>
        <dbReference type="ChEBI" id="CHEBI:57856"/>
        <dbReference type="ChEBI" id="CHEBI:59789"/>
        <dbReference type="ChEBI" id="CHEBI:231922"/>
        <dbReference type="ChEBI" id="CHEBI:231923"/>
    </reaction>
    <physiologicalReaction direction="left-to-right" evidence="2">
        <dbReference type="Rhea" id="RHEA:81532"/>
    </physiologicalReaction>
</comment>
<comment type="biophysicochemical properties">
    <kinetics>
        <KM evidence="2">1.14 mM for desmethylrestrictinol</KM>
    </kinetics>
</comment>
<comment type="pathway">
    <text evidence="2">Antifungal biosynthesis.</text>
</comment>
<comment type="similarity">
    <text evidence="4">Belongs to the methyltransferase superfamily.</text>
</comment>
<evidence type="ECO:0000250" key="1">
    <source>
        <dbReference type="UniProtKB" id="Q8KZ94"/>
    </source>
</evidence>
<evidence type="ECO:0000269" key="2">
    <source>
    </source>
</evidence>
<evidence type="ECO:0000303" key="3">
    <source>
    </source>
</evidence>
<evidence type="ECO:0000305" key="4"/>
<gene>
    <name evidence="3" type="primary">rstn1</name>
    <name type="ORF">ANOM_001442</name>
</gene>
<organism>
    <name type="scientific">Aspergillus nomiae NRRL (strain ATCC 15546 / NRRL 13137 / CBS 260.88 / M93)</name>
    <dbReference type="NCBI Taxonomy" id="1509407"/>
    <lineage>
        <taxon>Eukaryota</taxon>
        <taxon>Fungi</taxon>
        <taxon>Dikarya</taxon>
        <taxon>Ascomycota</taxon>
        <taxon>Pezizomycotina</taxon>
        <taxon>Eurotiomycetes</taxon>
        <taxon>Eurotiomycetidae</taxon>
        <taxon>Eurotiales</taxon>
        <taxon>Aspergillaceae</taxon>
        <taxon>Aspergillus</taxon>
        <taxon>Aspergillus subgen. Circumdati</taxon>
    </lineage>
</organism>
<proteinExistence type="evidence at protein level"/>
<sequence length="225" mass="24690">MSLQPTATEVGTMYDQYTSLLTDVMAGFIHVGYWDDPEREDTIEVATERLTREIGERLSSVRGQRILDVGCGTGKSAVQIATAHDVHITGITVSNHQIELAQSQYESNTKAGQVNFLFANAMDLPFADASFDGAYAIESLVHMDDRRTALTNIARVLRPGSRLAIADLFLDAGCPNPEVLARFHELFQVPPMPSGDDLKALLHQTGFKVIEFTDIRDTSGLSANF</sequence>
<feature type="chain" id="PRO_0000461536" description="O-methyltransferase rstn1">
    <location>
        <begin position="1"/>
        <end position="225"/>
    </location>
</feature>
<feature type="binding site" evidence="1">
    <location>
        <position position="97"/>
    </location>
    <ligand>
        <name>S-adenosyl-L-methionine</name>
        <dbReference type="ChEBI" id="CHEBI:59789"/>
    </ligand>
</feature>
<feature type="binding site" evidence="1">
    <location>
        <position position="142"/>
    </location>
    <ligand>
        <name>S-adenosyl-L-methionine</name>
        <dbReference type="ChEBI" id="CHEBI:59789"/>
    </ligand>
</feature>
<accession>A0A0L1JF88</accession>
<keyword id="KW-0489">Methyltransferase</keyword>
<keyword id="KW-1185">Reference proteome</keyword>
<keyword id="KW-0949">S-adenosyl-L-methionine</keyword>
<keyword id="KW-0808">Transferase</keyword>